<name>Y2587_SYNS3</name>
<accession>Q0I6Z6</accession>
<organism>
    <name type="scientific">Synechococcus sp. (strain CC9311)</name>
    <dbReference type="NCBI Taxonomy" id="64471"/>
    <lineage>
        <taxon>Bacteria</taxon>
        <taxon>Bacillati</taxon>
        <taxon>Cyanobacteriota</taxon>
        <taxon>Cyanophyceae</taxon>
        <taxon>Synechococcales</taxon>
        <taxon>Synechococcaceae</taxon>
        <taxon>Synechococcus</taxon>
    </lineage>
</organism>
<keyword id="KW-1185">Reference proteome</keyword>
<dbReference type="EMBL" id="CP000435">
    <property type="protein sequence ID" value="ABI45652.1"/>
    <property type="molecule type" value="Genomic_DNA"/>
</dbReference>
<dbReference type="STRING" id="64471.sync_2587"/>
<dbReference type="KEGG" id="syg:sync_2587"/>
<dbReference type="eggNOG" id="ENOG5032YB3">
    <property type="taxonomic scope" value="Bacteria"/>
</dbReference>
<dbReference type="HOGENOM" id="CLU_180777_0_0_3"/>
<dbReference type="OrthoDB" id="516864at2"/>
<dbReference type="Proteomes" id="UP000001961">
    <property type="component" value="Chromosome"/>
</dbReference>
<dbReference type="HAMAP" id="MF_01360">
    <property type="entry name" value="UPF0367"/>
    <property type="match status" value="1"/>
</dbReference>
<dbReference type="InterPro" id="IPR020885">
    <property type="entry name" value="UPF0367"/>
</dbReference>
<dbReference type="NCBIfam" id="NF010236">
    <property type="entry name" value="PRK13683.1"/>
    <property type="match status" value="1"/>
</dbReference>
<gene>
    <name type="ordered locus">sync_2587</name>
</gene>
<protein>
    <recommendedName>
        <fullName evidence="1">UPF0367 protein sync_2587</fullName>
    </recommendedName>
</protein>
<comment type="similarity">
    <text evidence="1">Belongs to the UPF0367 family.</text>
</comment>
<reference key="1">
    <citation type="journal article" date="2006" name="Proc. Natl. Acad. Sci. U.S.A.">
        <title>Genome sequence of Synechococcus CC9311: insights into adaptation to a coastal environment.</title>
        <authorList>
            <person name="Palenik B."/>
            <person name="Ren Q."/>
            <person name="Dupont C.L."/>
            <person name="Myers G.S."/>
            <person name="Heidelberg J.F."/>
            <person name="Badger J.H."/>
            <person name="Madupu R."/>
            <person name="Nelson W.C."/>
            <person name="Brinkac L.M."/>
            <person name="Dodson R.J."/>
            <person name="Durkin A.S."/>
            <person name="Daugherty S.C."/>
            <person name="Sullivan S.A."/>
            <person name="Khouri H."/>
            <person name="Mohamoud Y."/>
            <person name="Halpin R."/>
            <person name="Paulsen I.T."/>
        </authorList>
    </citation>
    <scope>NUCLEOTIDE SEQUENCE [LARGE SCALE GENOMIC DNA]</scope>
    <source>
        <strain>CC9311</strain>
    </source>
</reference>
<evidence type="ECO:0000255" key="1">
    <source>
        <dbReference type="HAMAP-Rule" id="MF_01360"/>
    </source>
</evidence>
<proteinExistence type="inferred from homology"/>
<feature type="chain" id="PRO_0000270215" description="UPF0367 protein sync_2587">
    <location>
        <begin position="1"/>
        <end position="110"/>
    </location>
</feature>
<sequence length="110" mass="12209">MKILRPPFRALSDENGVTNTFFTVYVVELALRMSPMPISVQRKESGDAESVYQQVRQALEQGQPRLLEMTCEKVEGKRLSVLTSDVLAVQIYEKTAASGGSKRPGFSLDS</sequence>